<organism>
    <name type="scientific">Nitrobacter winogradskyi (strain ATCC 25391 / DSM 10237 / CIP 104748 / NCIMB 11846 / Nb-255)</name>
    <dbReference type="NCBI Taxonomy" id="323098"/>
    <lineage>
        <taxon>Bacteria</taxon>
        <taxon>Pseudomonadati</taxon>
        <taxon>Pseudomonadota</taxon>
        <taxon>Alphaproteobacteria</taxon>
        <taxon>Hyphomicrobiales</taxon>
        <taxon>Nitrobacteraceae</taxon>
        <taxon>Nitrobacter</taxon>
    </lineage>
</organism>
<accession>Q3ST00</accession>
<keyword id="KW-0028">Amino-acid biosynthesis</keyword>
<keyword id="KW-0963">Cytoplasm</keyword>
<keyword id="KW-0368">Histidine biosynthesis</keyword>
<keyword id="KW-0378">Hydrolase</keyword>
<keyword id="KW-0460">Magnesium</keyword>
<keyword id="KW-0479">Metal-binding</keyword>
<keyword id="KW-1185">Reference proteome</keyword>
<keyword id="KW-0862">Zinc</keyword>
<proteinExistence type="inferred from homology"/>
<evidence type="ECO:0000255" key="1">
    <source>
        <dbReference type="HAMAP-Rule" id="MF_01021"/>
    </source>
</evidence>
<name>HIS3_NITWN</name>
<protein>
    <recommendedName>
        <fullName evidence="1">Phosphoribosyl-AMP cyclohydrolase</fullName>
        <shortName evidence="1">PRA-CH</shortName>
        <ecNumber evidence="1">3.5.4.19</ecNumber>
    </recommendedName>
</protein>
<gene>
    <name evidence="1" type="primary">hisI</name>
    <name type="ordered locus">Nwi_1330</name>
</gene>
<sequence>MSGSKSSSETEEGLAFQPSFDASGLVTCVATDAKTGDVLMVAHMNEEALRRTVETGDAWYYSRSRKALWRKGESSGQVQRVLEMRTDCDQDAVWIKVEQQGAACHTGRRSCFYRAVAKGEGAGIRLAFVDAERLFDPAEVYRAKA</sequence>
<feature type="chain" id="PRO_0000229827" description="Phosphoribosyl-AMP cyclohydrolase">
    <location>
        <begin position="1"/>
        <end position="145"/>
    </location>
</feature>
<feature type="binding site" evidence="1">
    <location>
        <position position="87"/>
    </location>
    <ligand>
        <name>Mg(2+)</name>
        <dbReference type="ChEBI" id="CHEBI:18420"/>
    </ligand>
</feature>
<feature type="binding site" evidence="1">
    <location>
        <position position="88"/>
    </location>
    <ligand>
        <name>Zn(2+)</name>
        <dbReference type="ChEBI" id="CHEBI:29105"/>
        <note>ligand shared between dimeric partners</note>
    </ligand>
</feature>
<feature type="binding site" evidence="1">
    <location>
        <position position="89"/>
    </location>
    <ligand>
        <name>Mg(2+)</name>
        <dbReference type="ChEBI" id="CHEBI:18420"/>
    </ligand>
</feature>
<feature type="binding site" evidence="1">
    <location>
        <position position="91"/>
    </location>
    <ligand>
        <name>Mg(2+)</name>
        <dbReference type="ChEBI" id="CHEBI:18420"/>
    </ligand>
</feature>
<feature type="binding site" evidence="1">
    <location>
        <position position="104"/>
    </location>
    <ligand>
        <name>Zn(2+)</name>
        <dbReference type="ChEBI" id="CHEBI:29105"/>
        <note>ligand shared between dimeric partners</note>
    </ligand>
</feature>
<feature type="binding site" evidence="1">
    <location>
        <position position="111"/>
    </location>
    <ligand>
        <name>Zn(2+)</name>
        <dbReference type="ChEBI" id="CHEBI:29105"/>
        <note>ligand shared between dimeric partners</note>
    </ligand>
</feature>
<reference key="1">
    <citation type="journal article" date="2006" name="Appl. Environ. Microbiol.">
        <title>Genome sequence of the chemolithoautotrophic nitrite-oxidizing bacterium Nitrobacter winogradskyi Nb-255.</title>
        <authorList>
            <person name="Starkenburg S.R."/>
            <person name="Chain P.S.G."/>
            <person name="Sayavedra-Soto L.A."/>
            <person name="Hauser L."/>
            <person name="Land M.L."/>
            <person name="Larimer F.W."/>
            <person name="Malfatti S.A."/>
            <person name="Klotz M.G."/>
            <person name="Bottomley P.J."/>
            <person name="Arp D.J."/>
            <person name="Hickey W.J."/>
        </authorList>
    </citation>
    <scope>NUCLEOTIDE SEQUENCE [LARGE SCALE GENOMIC DNA]</scope>
    <source>
        <strain>ATCC 25391 / DSM 10237 / CIP 104748 / NCIMB 11846 / Nb-255</strain>
    </source>
</reference>
<comment type="function">
    <text evidence="1">Catalyzes the hydrolysis of the adenine ring of phosphoribosyl-AMP.</text>
</comment>
<comment type="catalytic activity">
    <reaction evidence="1">
        <text>1-(5-phospho-beta-D-ribosyl)-5'-AMP + H2O = 1-(5-phospho-beta-D-ribosyl)-5-[(5-phospho-beta-D-ribosylamino)methylideneamino]imidazole-4-carboxamide</text>
        <dbReference type="Rhea" id="RHEA:20049"/>
        <dbReference type="ChEBI" id="CHEBI:15377"/>
        <dbReference type="ChEBI" id="CHEBI:58435"/>
        <dbReference type="ChEBI" id="CHEBI:59457"/>
        <dbReference type="EC" id="3.5.4.19"/>
    </reaction>
</comment>
<comment type="cofactor">
    <cofactor evidence="1">
        <name>Mg(2+)</name>
        <dbReference type="ChEBI" id="CHEBI:18420"/>
    </cofactor>
    <text evidence="1">Binds 1 Mg(2+) ion per subunit.</text>
</comment>
<comment type="cofactor">
    <cofactor evidence="1">
        <name>Zn(2+)</name>
        <dbReference type="ChEBI" id="CHEBI:29105"/>
    </cofactor>
    <text evidence="1">Binds 1 zinc ion per subunit.</text>
</comment>
<comment type="pathway">
    <text evidence="1">Amino-acid biosynthesis; L-histidine biosynthesis; L-histidine from 5-phospho-alpha-D-ribose 1-diphosphate: step 3/9.</text>
</comment>
<comment type="subunit">
    <text evidence="1">Homodimer.</text>
</comment>
<comment type="subcellular location">
    <subcellularLocation>
        <location evidence="1">Cytoplasm</location>
    </subcellularLocation>
</comment>
<comment type="similarity">
    <text evidence="1">Belongs to the PRA-CH family.</text>
</comment>
<dbReference type="EC" id="3.5.4.19" evidence="1"/>
<dbReference type="EMBL" id="CP000115">
    <property type="protein sequence ID" value="ABA04591.1"/>
    <property type="molecule type" value="Genomic_DNA"/>
</dbReference>
<dbReference type="RefSeq" id="WP_011314609.1">
    <property type="nucleotide sequence ID" value="NC_007406.1"/>
</dbReference>
<dbReference type="SMR" id="Q3ST00"/>
<dbReference type="STRING" id="323098.Nwi_1330"/>
<dbReference type="KEGG" id="nwi:Nwi_1330"/>
<dbReference type="eggNOG" id="COG0139">
    <property type="taxonomic scope" value="Bacteria"/>
</dbReference>
<dbReference type="HOGENOM" id="CLU_048577_5_0_5"/>
<dbReference type="OrthoDB" id="9795769at2"/>
<dbReference type="UniPathway" id="UPA00031">
    <property type="reaction ID" value="UER00008"/>
</dbReference>
<dbReference type="Proteomes" id="UP000002531">
    <property type="component" value="Chromosome"/>
</dbReference>
<dbReference type="GO" id="GO:0005737">
    <property type="term" value="C:cytoplasm"/>
    <property type="evidence" value="ECO:0007669"/>
    <property type="project" value="UniProtKB-SubCell"/>
</dbReference>
<dbReference type="GO" id="GO:0000287">
    <property type="term" value="F:magnesium ion binding"/>
    <property type="evidence" value="ECO:0007669"/>
    <property type="project" value="UniProtKB-UniRule"/>
</dbReference>
<dbReference type="GO" id="GO:0004635">
    <property type="term" value="F:phosphoribosyl-AMP cyclohydrolase activity"/>
    <property type="evidence" value="ECO:0007669"/>
    <property type="project" value="UniProtKB-UniRule"/>
</dbReference>
<dbReference type="GO" id="GO:0008270">
    <property type="term" value="F:zinc ion binding"/>
    <property type="evidence" value="ECO:0007669"/>
    <property type="project" value="UniProtKB-UniRule"/>
</dbReference>
<dbReference type="GO" id="GO:0000105">
    <property type="term" value="P:L-histidine biosynthetic process"/>
    <property type="evidence" value="ECO:0007669"/>
    <property type="project" value="UniProtKB-UniRule"/>
</dbReference>
<dbReference type="FunFam" id="3.10.20.810:FF:000001">
    <property type="entry name" value="Histidine biosynthesis bifunctional protein HisIE"/>
    <property type="match status" value="1"/>
</dbReference>
<dbReference type="Gene3D" id="4.10.80.70">
    <property type="match status" value="1"/>
</dbReference>
<dbReference type="Gene3D" id="3.10.20.810">
    <property type="entry name" value="Phosphoribosyl-AMP cyclohydrolase"/>
    <property type="match status" value="1"/>
</dbReference>
<dbReference type="HAMAP" id="MF_01021">
    <property type="entry name" value="HisI"/>
    <property type="match status" value="1"/>
</dbReference>
<dbReference type="InterPro" id="IPR026660">
    <property type="entry name" value="PRA-CH"/>
</dbReference>
<dbReference type="InterPro" id="IPR002496">
    <property type="entry name" value="PRib_AMP_CycHydrolase_dom"/>
</dbReference>
<dbReference type="InterPro" id="IPR038019">
    <property type="entry name" value="PRib_AMP_CycHydrolase_sf"/>
</dbReference>
<dbReference type="NCBIfam" id="NF000768">
    <property type="entry name" value="PRK00051.1"/>
    <property type="match status" value="1"/>
</dbReference>
<dbReference type="PANTHER" id="PTHR42945">
    <property type="entry name" value="HISTIDINE BIOSYNTHESIS BIFUNCTIONAL PROTEIN"/>
    <property type="match status" value="1"/>
</dbReference>
<dbReference type="PANTHER" id="PTHR42945:SF1">
    <property type="entry name" value="HISTIDINE BIOSYNTHESIS BIFUNCTIONAL PROTEIN HIS7"/>
    <property type="match status" value="1"/>
</dbReference>
<dbReference type="Pfam" id="PF01502">
    <property type="entry name" value="PRA-CH"/>
    <property type="match status" value="1"/>
</dbReference>
<dbReference type="SUPFAM" id="SSF141734">
    <property type="entry name" value="HisI-like"/>
    <property type="match status" value="1"/>
</dbReference>